<dbReference type="EC" id="2.7.7.4" evidence="2"/>
<dbReference type="EMBL" id="CP000468">
    <property type="protein sequence ID" value="ABJ02185.1"/>
    <property type="molecule type" value="Genomic_DNA"/>
</dbReference>
<dbReference type="RefSeq" id="WP_001090357.1">
    <property type="nucleotide sequence ID" value="NZ_CADILS010000024.1"/>
</dbReference>
<dbReference type="SMR" id="A1AEU5"/>
<dbReference type="KEGG" id="ecv:APECO1_3773"/>
<dbReference type="HOGENOM" id="CLU_007265_5_2_6"/>
<dbReference type="UniPathway" id="UPA00140">
    <property type="reaction ID" value="UER00204"/>
</dbReference>
<dbReference type="Proteomes" id="UP000008216">
    <property type="component" value="Chromosome"/>
</dbReference>
<dbReference type="GO" id="GO:0005524">
    <property type="term" value="F:ATP binding"/>
    <property type="evidence" value="ECO:0007669"/>
    <property type="project" value="UniProtKB-KW"/>
</dbReference>
<dbReference type="GO" id="GO:0005525">
    <property type="term" value="F:GTP binding"/>
    <property type="evidence" value="ECO:0007669"/>
    <property type="project" value="UniProtKB-UniRule"/>
</dbReference>
<dbReference type="GO" id="GO:0003924">
    <property type="term" value="F:GTPase activity"/>
    <property type="evidence" value="ECO:0007669"/>
    <property type="project" value="InterPro"/>
</dbReference>
<dbReference type="GO" id="GO:0004781">
    <property type="term" value="F:sulfate adenylyltransferase (ATP) activity"/>
    <property type="evidence" value="ECO:0007669"/>
    <property type="project" value="UniProtKB-UniRule"/>
</dbReference>
<dbReference type="GO" id="GO:0070814">
    <property type="term" value="P:hydrogen sulfide biosynthetic process"/>
    <property type="evidence" value="ECO:0007669"/>
    <property type="project" value="UniProtKB-UniRule"/>
</dbReference>
<dbReference type="GO" id="GO:0000103">
    <property type="term" value="P:sulfate assimilation"/>
    <property type="evidence" value="ECO:0007669"/>
    <property type="project" value="UniProtKB-UniRule"/>
</dbReference>
<dbReference type="CDD" id="cd04166">
    <property type="entry name" value="CysN_ATPS"/>
    <property type="match status" value="1"/>
</dbReference>
<dbReference type="CDD" id="cd03695">
    <property type="entry name" value="CysN_NodQ_II"/>
    <property type="match status" value="1"/>
</dbReference>
<dbReference type="CDD" id="cd04095">
    <property type="entry name" value="CysN_NoDQ_III"/>
    <property type="match status" value="1"/>
</dbReference>
<dbReference type="FunFam" id="2.40.30.10:FF:000027">
    <property type="entry name" value="Sulfate adenylyltransferase subunit 1"/>
    <property type="match status" value="1"/>
</dbReference>
<dbReference type="FunFam" id="2.40.30.10:FF:000031">
    <property type="entry name" value="Sulfate adenylyltransferase subunit 1"/>
    <property type="match status" value="1"/>
</dbReference>
<dbReference type="FunFam" id="3.40.50.300:FF:000119">
    <property type="entry name" value="Sulfate adenylyltransferase subunit 1"/>
    <property type="match status" value="1"/>
</dbReference>
<dbReference type="Gene3D" id="3.40.50.300">
    <property type="entry name" value="P-loop containing nucleotide triphosphate hydrolases"/>
    <property type="match status" value="1"/>
</dbReference>
<dbReference type="Gene3D" id="2.40.30.10">
    <property type="entry name" value="Translation factors"/>
    <property type="match status" value="2"/>
</dbReference>
<dbReference type="HAMAP" id="MF_00062">
    <property type="entry name" value="Sulf_adenylyltr_sub1"/>
    <property type="match status" value="1"/>
</dbReference>
<dbReference type="InterPro" id="IPR041757">
    <property type="entry name" value="CysN_GTP-bd"/>
</dbReference>
<dbReference type="InterPro" id="IPR044138">
    <property type="entry name" value="CysN_II"/>
</dbReference>
<dbReference type="InterPro" id="IPR044139">
    <property type="entry name" value="CysN_NoDQ_III"/>
</dbReference>
<dbReference type="InterPro" id="IPR031157">
    <property type="entry name" value="G_TR_CS"/>
</dbReference>
<dbReference type="InterPro" id="IPR054696">
    <property type="entry name" value="GTP-eEF1A_C"/>
</dbReference>
<dbReference type="InterPro" id="IPR027417">
    <property type="entry name" value="P-loop_NTPase"/>
</dbReference>
<dbReference type="InterPro" id="IPR005225">
    <property type="entry name" value="Small_GTP-bd"/>
</dbReference>
<dbReference type="InterPro" id="IPR011779">
    <property type="entry name" value="SO4_adenylTrfase_lsu"/>
</dbReference>
<dbReference type="InterPro" id="IPR000795">
    <property type="entry name" value="T_Tr_GTP-bd_dom"/>
</dbReference>
<dbReference type="InterPro" id="IPR050100">
    <property type="entry name" value="TRAFAC_GTPase_members"/>
</dbReference>
<dbReference type="InterPro" id="IPR009000">
    <property type="entry name" value="Transl_B-barrel_sf"/>
</dbReference>
<dbReference type="InterPro" id="IPR009001">
    <property type="entry name" value="Transl_elong_EF1A/Init_IF2_C"/>
</dbReference>
<dbReference type="NCBIfam" id="TIGR02034">
    <property type="entry name" value="CysN"/>
    <property type="match status" value="1"/>
</dbReference>
<dbReference type="NCBIfam" id="NF003478">
    <property type="entry name" value="PRK05124.1"/>
    <property type="match status" value="1"/>
</dbReference>
<dbReference type="NCBIfam" id="TIGR00231">
    <property type="entry name" value="small_GTP"/>
    <property type="match status" value="1"/>
</dbReference>
<dbReference type="PANTHER" id="PTHR23115">
    <property type="entry name" value="TRANSLATION FACTOR"/>
    <property type="match status" value="1"/>
</dbReference>
<dbReference type="Pfam" id="PF22594">
    <property type="entry name" value="GTP-eEF1A_C"/>
    <property type="match status" value="1"/>
</dbReference>
<dbReference type="Pfam" id="PF00009">
    <property type="entry name" value="GTP_EFTU"/>
    <property type="match status" value="1"/>
</dbReference>
<dbReference type="PRINTS" id="PR00315">
    <property type="entry name" value="ELONGATNFCT"/>
</dbReference>
<dbReference type="SUPFAM" id="SSF50465">
    <property type="entry name" value="EF-Tu/eEF-1alpha/eIF2-gamma C-terminal domain"/>
    <property type="match status" value="1"/>
</dbReference>
<dbReference type="SUPFAM" id="SSF52540">
    <property type="entry name" value="P-loop containing nucleoside triphosphate hydrolases"/>
    <property type="match status" value="1"/>
</dbReference>
<dbReference type="SUPFAM" id="SSF50447">
    <property type="entry name" value="Translation proteins"/>
    <property type="match status" value="1"/>
</dbReference>
<dbReference type="PROSITE" id="PS00301">
    <property type="entry name" value="G_TR_1"/>
    <property type="match status" value="1"/>
</dbReference>
<dbReference type="PROSITE" id="PS51722">
    <property type="entry name" value="G_TR_2"/>
    <property type="match status" value="1"/>
</dbReference>
<protein>
    <recommendedName>
        <fullName evidence="2">Sulfate adenylyltransferase subunit 1</fullName>
        <ecNumber evidence="2">2.7.7.4</ecNumber>
    </recommendedName>
    <alternativeName>
        <fullName evidence="2">ATP-sulfurylase large subunit</fullName>
    </alternativeName>
    <alternativeName>
        <fullName evidence="2">Sulfate adenylate transferase</fullName>
        <shortName evidence="2">SAT</shortName>
    </alternativeName>
</protein>
<proteinExistence type="inferred from homology"/>
<reference key="1">
    <citation type="journal article" date="2007" name="J. Bacteriol.">
        <title>The genome sequence of avian pathogenic Escherichia coli strain O1:K1:H7 shares strong similarities with human extraintestinal pathogenic E. coli genomes.</title>
        <authorList>
            <person name="Johnson T.J."/>
            <person name="Kariyawasam S."/>
            <person name="Wannemuehler Y."/>
            <person name="Mangiamele P."/>
            <person name="Johnson S.J."/>
            <person name="Doetkott C."/>
            <person name="Skyberg J.A."/>
            <person name="Lynne A.M."/>
            <person name="Johnson J.R."/>
            <person name="Nolan L.K."/>
        </authorList>
    </citation>
    <scope>NUCLEOTIDE SEQUENCE [LARGE SCALE GENOMIC DNA]</scope>
</reference>
<organism>
    <name type="scientific">Escherichia coli O1:K1 / APEC</name>
    <dbReference type="NCBI Taxonomy" id="405955"/>
    <lineage>
        <taxon>Bacteria</taxon>
        <taxon>Pseudomonadati</taxon>
        <taxon>Pseudomonadota</taxon>
        <taxon>Gammaproteobacteria</taxon>
        <taxon>Enterobacterales</taxon>
        <taxon>Enterobacteriaceae</taxon>
        <taxon>Escherichia</taxon>
    </lineage>
</organism>
<evidence type="ECO:0000250" key="1"/>
<evidence type="ECO:0000255" key="2">
    <source>
        <dbReference type="HAMAP-Rule" id="MF_00062"/>
    </source>
</evidence>
<name>CYSN_ECOK1</name>
<gene>
    <name evidence="2" type="primary">cysN</name>
    <name type="ordered locus">Ecok1_26910</name>
    <name type="ORF">APECO1_3773</name>
</gene>
<keyword id="KW-0067">ATP-binding</keyword>
<keyword id="KW-0342">GTP-binding</keyword>
<keyword id="KW-0547">Nucleotide-binding</keyword>
<keyword id="KW-0548">Nucleotidyltransferase</keyword>
<keyword id="KW-1185">Reference proteome</keyword>
<keyword id="KW-0808">Transferase</keyword>
<sequence>MNTALAQQIANEGGVEAWMIAQQHKSLLRFLTCGSVDDGKSTLIGRLLHDTRQIYEDQLSSLHNDSKRHGTQGEKLDLALLVDGLQAEREQGITIDVAYRYFSTEKRKFIIADTPGHEQYTRNMATGASTCELAILLIDARKGVLDQTRRHSFISTLLGIKHLVVAINKMDLVDYSEETFTRIREDYLTFAGQLPGNLDIRFVPLSALEGDNVASQSESMPWYSGPTLLEVLETVEIQRVVDAQPMRFPVQYVNRPNLDFRGYAGTLASGRVEVGQRVKVLPSGVESNVARIVTFDGDREEAFAGEAITLVLTDEIDISRGDLLLAADEALPAVQSASVDVVWMAEQPLSPGQSYDIKIAGKKTRARVDGIHYQVDINNLTQREVENLPLNGIGLVDLTFDEPLVLDRYQQNPVTGGLIFIDRLSNVTVGAGMVHEPVSQATAAPSEFSAFELELNALVRRHFPHWGARDLLGDK</sequence>
<comment type="function">
    <text evidence="2">With CysD forms the ATP sulfurylase (ATPS) that catalyzes the adenylation of sulfate producing adenosine 5'-phosphosulfate (APS) and diphosphate, the first enzymatic step in sulfur assimilation pathway. APS synthesis involves the formation of a high-energy phosphoric-sulfuric acid anhydride bond driven by GTP hydrolysis by CysN coupled to ATP hydrolysis by CysD.</text>
</comment>
<comment type="catalytic activity">
    <reaction evidence="2">
        <text>sulfate + ATP + H(+) = adenosine 5'-phosphosulfate + diphosphate</text>
        <dbReference type="Rhea" id="RHEA:18133"/>
        <dbReference type="ChEBI" id="CHEBI:15378"/>
        <dbReference type="ChEBI" id="CHEBI:16189"/>
        <dbReference type="ChEBI" id="CHEBI:30616"/>
        <dbReference type="ChEBI" id="CHEBI:33019"/>
        <dbReference type="ChEBI" id="CHEBI:58243"/>
        <dbReference type="EC" id="2.7.7.4"/>
    </reaction>
</comment>
<comment type="pathway">
    <text evidence="2">Sulfur metabolism; hydrogen sulfide biosynthesis; sulfite from sulfate: step 1/3.</text>
</comment>
<comment type="subunit">
    <text evidence="2">Heterodimer composed of CysD, the smaller subunit, and CysN.</text>
</comment>
<comment type="similarity">
    <text evidence="2">Belongs to the TRAFAC class translation factor GTPase superfamily. Classic translation factor GTPase family. CysN/NodQ subfamily.</text>
</comment>
<accession>A1AEU5</accession>
<feature type="chain" id="PRO_1000008902" description="Sulfate adenylyltransferase subunit 1">
    <location>
        <begin position="1"/>
        <end position="475"/>
    </location>
</feature>
<feature type="domain" description="tr-type G">
    <location>
        <begin position="25"/>
        <end position="239"/>
    </location>
</feature>
<feature type="region of interest" description="G1" evidence="1">
    <location>
        <begin position="34"/>
        <end position="41"/>
    </location>
</feature>
<feature type="region of interest" description="G2" evidence="1">
    <location>
        <begin position="92"/>
        <end position="96"/>
    </location>
</feature>
<feature type="region of interest" description="G3" evidence="1">
    <location>
        <begin position="113"/>
        <end position="116"/>
    </location>
</feature>
<feature type="region of interest" description="G4" evidence="1">
    <location>
        <begin position="168"/>
        <end position="171"/>
    </location>
</feature>
<feature type="region of interest" description="G5" evidence="1">
    <location>
        <begin position="206"/>
        <end position="208"/>
    </location>
</feature>
<feature type="binding site" evidence="2">
    <location>
        <begin position="34"/>
        <end position="41"/>
    </location>
    <ligand>
        <name>GTP</name>
        <dbReference type="ChEBI" id="CHEBI:37565"/>
    </ligand>
</feature>
<feature type="binding site" evidence="2">
    <location>
        <begin position="113"/>
        <end position="117"/>
    </location>
    <ligand>
        <name>GTP</name>
        <dbReference type="ChEBI" id="CHEBI:37565"/>
    </ligand>
</feature>
<feature type="binding site" evidence="2">
    <location>
        <begin position="168"/>
        <end position="171"/>
    </location>
    <ligand>
        <name>GTP</name>
        <dbReference type="ChEBI" id="CHEBI:37565"/>
    </ligand>
</feature>